<proteinExistence type="inferred from homology"/>
<evidence type="ECO:0000255" key="1">
    <source>
        <dbReference type="HAMAP-Rule" id="MF_01821"/>
    </source>
</evidence>
<keyword id="KW-0010">Activator</keyword>
<keyword id="KW-0067">ATP-binding</keyword>
<keyword id="KW-0238">DNA-binding</keyword>
<keyword id="KW-0347">Helicase</keyword>
<keyword id="KW-0378">Hydrolase</keyword>
<keyword id="KW-0547">Nucleotide-binding</keyword>
<keyword id="KW-1185">Reference proteome</keyword>
<keyword id="KW-0804">Transcription</keyword>
<keyword id="KW-0805">Transcription regulation</keyword>
<sequence length="952" mass="107559">MSFALGQRWISDTESDLGLGTVVAVDDRTVSLLFAASEENRLYAKHDAPVTRVMFNKGDTIESHEGWSLDVEDVIEEGGLLTYIGTRVDTDEANVVLRETLLSHQIRFNKPQDKLFAGQIDRMDRFALRFRALQNQYEQHKSPMRGLCGMRAGLIPHQLFIAHEVGRRYAPRVLLADEVGLGKTIEAGMIIHQQVLSGRAERVLIVVPETLQHQWLVEMMRRFNLHFSIFDEERCVEAYADSENPFDTAQFVLCSLDFIRKSKRRFEQVVEADWDLLVVDEAHHLEWNQTKPSREYQVIEAIAEETPGVLLLTATPEQLGHESHFARLRLLDPDRFYDYDAFVEEERQYQPVADAVTALMSGEKLSNDAKNRITELLSEQDVEPLFRIIESSAAEDEQAQARQELVDNLMDRHGTGRVLFRNTRAAIKGFPQRNLNLMPMPLPSQYATSMRVATMMGGRMTDEARAMKMLYPEEIFQEFEGDSATWWQFDPRVNWLLELLKENRNEKVLIIASRASTALQLEQALREREGIRGTVFHEGMSIIERDKAAAYFAQEEGGAQVLICSEIGSEGRNFQFANQLVMFDLPFNPDLLEQRIGRLDRIGQKRDIEIHVPYLQGTSQELLARWFDEGLNAFGETCPTGRAVYDKFADAIIAILATGKSDGLESLIEESATLNKALKSQLEQGRDRLLEVHSNGGDKAKEIAEQIAATDGDTNLVNFALNLFDTIGLNQDDKGENAIVVTPAENMLVSSYPGLPYEGCTITFDRETALSREDMNLISWEHPMIQGGIDLVLTEGVGATAVSLLKNKALPAGTLLLELVYVVDAQAPKQSGIARFLPKTPIRIMMDGKGNDLSAQVEFESFNRQLSPVNRHMASKLVNSVQKEIHGLIDKAEISMEERLESVRTDAEKEMKAALNSELERLQALKAVNPNIRDEELTQIGNSNERTIWLYW</sequence>
<protein>
    <recommendedName>
        <fullName evidence="1">RNA polymerase-associated protein RapA</fullName>
        <ecNumber evidence="1">3.6.4.-</ecNumber>
    </recommendedName>
    <alternativeName>
        <fullName evidence="1">ATP-dependent helicase HepA</fullName>
    </alternativeName>
</protein>
<dbReference type="EC" id="3.6.4.-" evidence="1"/>
<dbReference type="EMBL" id="CP000020">
    <property type="protein sequence ID" value="AAW84765.1"/>
    <property type="molecule type" value="Genomic_DNA"/>
</dbReference>
<dbReference type="RefSeq" id="YP_203653.1">
    <property type="nucleotide sequence ID" value="NC_006840.2"/>
</dbReference>
<dbReference type="SMR" id="Q5E881"/>
<dbReference type="STRING" id="312309.VF_0270"/>
<dbReference type="EnsemblBacteria" id="AAW84765">
    <property type="protein sequence ID" value="AAW84765"/>
    <property type="gene ID" value="VF_0270"/>
</dbReference>
<dbReference type="KEGG" id="vfi:VF_0270"/>
<dbReference type="PATRIC" id="fig|312309.11.peg.265"/>
<dbReference type="eggNOG" id="COG0553">
    <property type="taxonomic scope" value="Bacteria"/>
</dbReference>
<dbReference type="HOGENOM" id="CLU_011520_0_0_6"/>
<dbReference type="OrthoDB" id="9814088at2"/>
<dbReference type="Proteomes" id="UP000000537">
    <property type="component" value="Chromosome I"/>
</dbReference>
<dbReference type="GO" id="GO:0005524">
    <property type="term" value="F:ATP binding"/>
    <property type="evidence" value="ECO:0007669"/>
    <property type="project" value="UniProtKB-UniRule"/>
</dbReference>
<dbReference type="GO" id="GO:0003677">
    <property type="term" value="F:DNA binding"/>
    <property type="evidence" value="ECO:0007669"/>
    <property type="project" value="UniProtKB-KW"/>
</dbReference>
<dbReference type="GO" id="GO:0004386">
    <property type="term" value="F:helicase activity"/>
    <property type="evidence" value="ECO:0007669"/>
    <property type="project" value="UniProtKB-UniRule"/>
</dbReference>
<dbReference type="GO" id="GO:0016817">
    <property type="term" value="F:hydrolase activity, acting on acid anhydrides"/>
    <property type="evidence" value="ECO:0007669"/>
    <property type="project" value="InterPro"/>
</dbReference>
<dbReference type="GO" id="GO:0006355">
    <property type="term" value="P:regulation of DNA-templated transcription"/>
    <property type="evidence" value="ECO:0007669"/>
    <property type="project" value="UniProtKB-UniRule"/>
</dbReference>
<dbReference type="CDD" id="cd18011">
    <property type="entry name" value="DEXDc_RapA"/>
    <property type="match status" value="1"/>
</dbReference>
<dbReference type="CDD" id="cd18793">
    <property type="entry name" value="SF2_C_SNF"/>
    <property type="match status" value="1"/>
</dbReference>
<dbReference type="FunFam" id="3.40.50.10810:FF:000012">
    <property type="entry name" value="RNA polymerase-associated protein RapA"/>
    <property type="match status" value="1"/>
</dbReference>
<dbReference type="Gene3D" id="2.30.30.140">
    <property type="match status" value="1"/>
</dbReference>
<dbReference type="Gene3D" id="2.30.30.930">
    <property type="match status" value="1"/>
</dbReference>
<dbReference type="Gene3D" id="3.30.360.80">
    <property type="match status" value="1"/>
</dbReference>
<dbReference type="Gene3D" id="6.10.140.1500">
    <property type="match status" value="1"/>
</dbReference>
<dbReference type="Gene3D" id="6.10.140.2230">
    <property type="match status" value="1"/>
</dbReference>
<dbReference type="Gene3D" id="3.40.50.300">
    <property type="entry name" value="P-loop containing nucleotide triphosphate hydrolases"/>
    <property type="match status" value="1"/>
</dbReference>
<dbReference type="Gene3D" id="3.40.50.10810">
    <property type="entry name" value="Tandem AAA-ATPase domain"/>
    <property type="match status" value="1"/>
</dbReference>
<dbReference type="HAMAP" id="MF_01821">
    <property type="entry name" value="Helicase_RapA"/>
    <property type="match status" value="1"/>
</dbReference>
<dbReference type="InterPro" id="IPR014001">
    <property type="entry name" value="Helicase_ATP-bd"/>
</dbReference>
<dbReference type="InterPro" id="IPR001650">
    <property type="entry name" value="Helicase_C-like"/>
</dbReference>
<dbReference type="InterPro" id="IPR023949">
    <property type="entry name" value="Helicase_RapA"/>
</dbReference>
<dbReference type="InterPro" id="IPR027417">
    <property type="entry name" value="P-loop_NTPase"/>
</dbReference>
<dbReference type="InterPro" id="IPR022737">
    <property type="entry name" value="RapA_C"/>
</dbReference>
<dbReference type="InterPro" id="IPR038718">
    <property type="entry name" value="SNF2-like_sf"/>
</dbReference>
<dbReference type="InterPro" id="IPR049730">
    <property type="entry name" value="SNF2/RAD54-like_C"/>
</dbReference>
<dbReference type="InterPro" id="IPR000330">
    <property type="entry name" value="SNF2_N"/>
</dbReference>
<dbReference type="InterPro" id="IPR040765">
    <property type="entry name" value="Tudor_1_RapA"/>
</dbReference>
<dbReference type="InterPro" id="IPR040766">
    <property type="entry name" value="Tudor_2_RapA"/>
</dbReference>
<dbReference type="NCBIfam" id="NF003426">
    <property type="entry name" value="PRK04914.1"/>
    <property type="match status" value="1"/>
</dbReference>
<dbReference type="PANTHER" id="PTHR45766">
    <property type="entry name" value="DNA ANNEALING HELICASE AND ENDONUCLEASE ZRANB3 FAMILY MEMBER"/>
    <property type="match status" value="1"/>
</dbReference>
<dbReference type="PANTHER" id="PTHR45766:SF6">
    <property type="entry name" value="SWI_SNF-RELATED MATRIX-ASSOCIATED ACTIN-DEPENDENT REGULATOR OF CHROMATIN SUBFAMILY A-LIKE PROTEIN 1"/>
    <property type="match status" value="1"/>
</dbReference>
<dbReference type="Pfam" id="PF00271">
    <property type="entry name" value="Helicase_C"/>
    <property type="match status" value="1"/>
</dbReference>
<dbReference type="Pfam" id="PF12137">
    <property type="entry name" value="RapA_C"/>
    <property type="match status" value="1"/>
</dbReference>
<dbReference type="Pfam" id="PF00176">
    <property type="entry name" value="SNF2-rel_dom"/>
    <property type="match status" value="1"/>
</dbReference>
<dbReference type="Pfam" id="PF18339">
    <property type="entry name" value="Tudor_1_RapA"/>
    <property type="match status" value="1"/>
</dbReference>
<dbReference type="Pfam" id="PF18337">
    <property type="entry name" value="Tudor_RapA"/>
    <property type="match status" value="1"/>
</dbReference>
<dbReference type="SMART" id="SM00487">
    <property type="entry name" value="DEXDc"/>
    <property type="match status" value="1"/>
</dbReference>
<dbReference type="SMART" id="SM00490">
    <property type="entry name" value="HELICc"/>
    <property type="match status" value="1"/>
</dbReference>
<dbReference type="SUPFAM" id="SSF52540">
    <property type="entry name" value="P-loop containing nucleoside triphosphate hydrolases"/>
    <property type="match status" value="2"/>
</dbReference>
<dbReference type="PROSITE" id="PS51192">
    <property type="entry name" value="HELICASE_ATP_BIND_1"/>
    <property type="match status" value="1"/>
</dbReference>
<dbReference type="PROSITE" id="PS51194">
    <property type="entry name" value="HELICASE_CTER"/>
    <property type="match status" value="1"/>
</dbReference>
<comment type="function">
    <text evidence="1">Transcription regulator that activates transcription by stimulating RNA polymerase (RNAP) recycling in case of stress conditions such as supercoiled DNA or high salt concentrations. Probably acts by releasing the RNAP, when it is trapped or immobilized on tightly supercoiled DNA. Does not activate transcription on linear DNA. Probably not involved in DNA repair.</text>
</comment>
<comment type="subunit">
    <text evidence="1">Interacts with the RNAP. Has a higher affinity for the core RNAP than for the holoenzyme. Its ATPase activity is stimulated by binding to RNAP.</text>
</comment>
<comment type="similarity">
    <text evidence="1">Belongs to the SNF2/RAD54 helicase family. RapA subfamily.</text>
</comment>
<organism>
    <name type="scientific">Aliivibrio fischeri (strain ATCC 700601 / ES114)</name>
    <name type="common">Vibrio fischeri</name>
    <dbReference type="NCBI Taxonomy" id="312309"/>
    <lineage>
        <taxon>Bacteria</taxon>
        <taxon>Pseudomonadati</taxon>
        <taxon>Pseudomonadota</taxon>
        <taxon>Gammaproteobacteria</taxon>
        <taxon>Vibrionales</taxon>
        <taxon>Vibrionaceae</taxon>
        <taxon>Aliivibrio</taxon>
    </lineage>
</organism>
<name>RAPA_ALIF1</name>
<accession>Q5E881</accession>
<feature type="chain" id="PRO_1000188195" description="RNA polymerase-associated protein RapA">
    <location>
        <begin position="1"/>
        <end position="952"/>
    </location>
</feature>
<feature type="domain" description="Helicase ATP-binding" evidence="1">
    <location>
        <begin position="164"/>
        <end position="334"/>
    </location>
</feature>
<feature type="domain" description="Helicase C-terminal" evidence="1">
    <location>
        <begin position="492"/>
        <end position="668"/>
    </location>
</feature>
<feature type="short sequence motif" description="DEAH box">
    <location>
        <begin position="280"/>
        <end position="283"/>
    </location>
</feature>
<feature type="binding site" evidence="1">
    <location>
        <begin position="177"/>
        <end position="184"/>
    </location>
    <ligand>
        <name>ATP</name>
        <dbReference type="ChEBI" id="CHEBI:30616"/>
    </ligand>
</feature>
<reference key="1">
    <citation type="journal article" date="2005" name="Proc. Natl. Acad. Sci. U.S.A.">
        <title>Complete genome sequence of Vibrio fischeri: a symbiotic bacterium with pathogenic congeners.</title>
        <authorList>
            <person name="Ruby E.G."/>
            <person name="Urbanowski M."/>
            <person name="Campbell J."/>
            <person name="Dunn A."/>
            <person name="Faini M."/>
            <person name="Gunsalus R."/>
            <person name="Lostroh P."/>
            <person name="Lupp C."/>
            <person name="McCann J."/>
            <person name="Millikan D."/>
            <person name="Schaefer A."/>
            <person name="Stabb E."/>
            <person name="Stevens A."/>
            <person name="Visick K."/>
            <person name="Whistler C."/>
            <person name="Greenberg E.P."/>
        </authorList>
    </citation>
    <scope>NUCLEOTIDE SEQUENCE [LARGE SCALE GENOMIC DNA]</scope>
    <source>
        <strain>ATCC 700601 / ES114</strain>
    </source>
</reference>
<gene>
    <name evidence="1" type="primary">rapA</name>
    <name type="ordered locus">VF_0270</name>
</gene>